<reference key="1">
    <citation type="journal article" date="2008" name="PLoS Genet.">
        <title>Complete genome sequence of the N2-fixing broad host range endophyte Klebsiella pneumoniae 342 and virulence predictions verified in mice.</title>
        <authorList>
            <person name="Fouts D.E."/>
            <person name="Tyler H.L."/>
            <person name="DeBoy R.T."/>
            <person name="Daugherty S."/>
            <person name="Ren Q."/>
            <person name="Badger J.H."/>
            <person name="Durkin A.S."/>
            <person name="Huot H."/>
            <person name="Shrivastava S."/>
            <person name="Kothari S."/>
            <person name="Dodson R.J."/>
            <person name="Mohamoud Y."/>
            <person name="Khouri H."/>
            <person name="Roesch L.F.W."/>
            <person name="Krogfelt K.A."/>
            <person name="Struve C."/>
            <person name="Triplett E.W."/>
            <person name="Methe B.A."/>
        </authorList>
    </citation>
    <scope>NUCLEOTIDE SEQUENCE [LARGE SCALE GENOMIC DNA]</scope>
    <source>
        <strain>342</strain>
    </source>
</reference>
<comment type="similarity">
    <text evidence="1">Belongs to the UPF0304 family.</text>
</comment>
<sequence>MEMTNAQRLILSNQYKMMTMLDPDNAERYRRLQTIIERGYGLQMRELDREFGQLTEETCRTVIDIMEMYHALHVSWTNLKDAAGIDERRVTFLGFDAATEARFLGYVRFMVNIEGRYSHFDAGTHGFNSQTPMWEKYQRMLSVWHACPRQYHLSSNEINQIINA</sequence>
<feature type="chain" id="PRO_1000198342" description="UPF0304 protein KPK_1463">
    <location>
        <begin position="1"/>
        <end position="164"/>
    </location>
</feature>
<proteinExistence type="inferred from homology"/>
<name>Y1463_KLEP3</name>
<protein>
    <recommendedName>
        <fullName evidence="1">UPF0304 protein KPK_1463</fullName>
    </recommendedName>
</protein>
<accession>B5XNU6</accession>
<gene>
    <name type="ordered locus">KPK_1463</name>
</gene>
<evidence type="ECO:0000255" key="1">
    <source>
        <dbReference type="HAMAP-Rule" id="MF_00762"/>
    </source>
</evidence>
<dbReference type="EMBL" id="CP000964">
    <property type="protein sequence ID" value="ACI09841.1"/>
    <property type="molecule type" value="Genomic_DNA"/>
</dbReference>
<dbReference type="SMR" id="B5XNU6"/>
<dbReference type="KEGG" id="kpe:KPK_1463"/>
<dbReference type="HOGENOM" id="CLU_101021_1_0_6"/>
<dbReference type="BioCyc" id="KPNE507522:GI0B-1463-MONOMER"/>
<dbReference type="Proteomes" id="UP000001734">
    <property type="component" value="Chromosome"/>
</dbReference>
<dbReference type="Gene3D" id="1.10.287.680">
    <property type="entry name" value="Helix hairpin bin"/>
    <property type="match status" value="1"/>
</dbReference>
<dbReference type="Gene3D" id="1.10.3190.10">
    <property type="entry name" value="yfbu gene product, domain 2"/>
    <property type="match status" value="1"/>
</dbReference>
<dbReference type="HAMAP" id="MF_00762">
    <property type="entry name" value="UPF0304"/>
    <property type="match status" value="1"/>
</dbReference>
<dbReference type="InterPro" id="IPR005587">
    <property type="entry name" value="UPF0304_YfbU"/>
</dbReference>
<dbReference type="InterPro" id="IPR023146">
    <property type="entry name" value="YfbU_alpha-helical_sf"/>
</dbReference>
<dbReference type="InterPro" id="IPR023145">
    <property type="entry name" value="YfbU_helix-hairpin_sf"/>
</dbReference>
<dbReference type="NCBIfam" id="NF003936">
    <property type="entry name" value="PRK05445.1"/>
    <property type="match status" value="1"/>
</dbReference>
<dbReference type="Pfam" id="PF03887">
    <property type="entry name" value="YfbU"/>
    <property type="match status" value="1"/>
</dbReference>
<dbReference type="PIRSF" id="PIRSF006272">
    <property type="entry name" value="UCP006272"/>
    <property type="match status" value="1"/>
</dbReference>
<dbReference type="SUPFAM" id="SSF116960">
    <property type="entry name" value="YfbU-like"/>
    <property type="match status" value="1"/>
</dbReference>
<organism>
    <name type="scientific">Klebsiella pneumoniae (strain 342)</name>
    <dbReference type="NCBI Taxonomy" id="507522"/>
    <lineage>
        <taxon>Bacteria</taxon>
        <taxon>Pseudomonadati</taxon>
        <taxon>Pseudomonadota</taxon>
        <taxon>Gammaproteobacteria</taxon>
        <taxon>Enterobacterales</taxon>
        <taxon>Enterobacteriaceae</taxon>
        <taxon>Klebsiella/Raoultella group</taxon>
        <taxon>Klebsiella</taxon>
        <taxon>Klebsiella pneumoniae complex</taxon>
    </lineage>
</organism>